<proteinExistence type="inferred from homology"/>
<sequence length="349" mass="38493">MSLLPPLTIRLCSPRGFCAGVDRAIQIVILALKKYGAPVYVRHEIVHNRYVVEGLQQRGAVFVEELDEIPEKHRGQPVVFSAHGVPKSVSEKASLYNLFYLDATCPLVSKVHKQAIRHQRHGRHVILIGHSGHPEVIGTMGQLEKGAVTLIETVEDALYYQPENPNKLGFVTQTTLSVEDTAGILDVLQKRFPALESPATESICYATTNRQEAVKAAALGSDLFLIVGSSNSSNARRLVEVAERFGARQSILVQRADDIDFDRLGTLSVISLSAGASAPEIIVDEIITAFRKRYNVKIELAETAVETQQFLVNRELRDVILTPQDMAFVSGGVKTGRNDDTQMLKIEEK</sequence>
<evidence type="ECO:0000255" key="1">
    <source>
        <dbReference type="HAMAP-Rule" id="MF_00191"/>
    </source>
</evidence>
<feature type="chain" id="PRO_1000021090" description="4-hydroxy-3-methylbut-2-enyl diphosphate reductase">
    <location>
        <begin position="1"/>
        <end position="349"/>
    </location>
</feature>
<feature type="active site" description="Proton donor" evidence="1">
    <location>
        <position position="135"/>
    </location>
</feature>
<feature type="binding site" evidence="1">
    <location>
        <position position="18"/>
    </location>
    <ligand>
        <name>[4Fe-4S] cluster</name>
        <dbReference type="ChEBI" id="CHEBI:49883"/>
    </ligand>
</feature>
<feature type="binding site" evidence="1">
    <location>
        <position position="47"/>
    </location>
    <ligand>
        <name>(2E)-4-hydroxy-3-methylbut-2-enyl diphosphate</name>
        <dbReference type="ChEBI" id="CHEBI:128753"/>
    </ligand>
</feature>
<feature type="binding site" evidence="1">
    <location>
        <position position="47"/>
    </location>
    <ligand>
        <name>dimethylallyl diphosphate</name>
        <dbReference type="ChEBI" id="CHEBI:57623"/>
    </ligand>
</feature>
<feature type="binding site" evidence="1">
    <location>
        <position position="47"/>
    </location>
    <ligand>
        <name>isopentenyl diphosphate</name>
        <dbReference type="ChEBI" id="CHEBI:128769"/>
    </ligand>
</feature>
<feature type="binding site" evidence="1">
    <location>
        <position position="83"/>
    </location>
    <ligand>
        <name>(2E)-4-hydroxy-3-methylbut-2-enyl diphosphate</name>
        <dbReference type="ChEBI" id="CHEBI:128753"/>
    </ligand>
</feature>
<feature type="binding site" evidence="1">
    <location>
        <position position="83"/>
    </location>
    <ligand>
        <name>dimethylallyl diphosphate</name>
        <dbReference type="ChEBI" id="CHEBI:57623"/>
    </ligand>
</feature>
<feature type="binding site" evidence="1">
    <location>
        <position position="83"/>
    </location>
    <ligand>
        <name>isopentenyl diphosphate</name>
        <dbReference type="ChEBI" id="CHEBI:128769"/>
    </ligand>
</feature>
<feature type="binding site" evidence="1">
    <location>
        <position position="105"/>
    </location>
    <ligand>
        <name>[4Fe-4S] cluster</name>
        <dbReference type="ChEBI" id="CHEBI:49883"/>
    </ligand>
</feature>
<feature type="binding site" evidence="1">
    <location>
        <position position="133"/>
    </location>
    <ligand>
        <name>(2E)-4-hydroxy-3-methylbut-2-enyl diphosphate</name>
        <dbReference type="ChEBI" id="CHEBI:128753"/>
    </ligand>
</feature>
<feature type="binding site" evidence="1">
    <location>
        <position position="133"/>
    </location>
    <ligand>
        <name>dimethylallyl diphosphate</name>
        <dbReference type="ChEBI" id="CHEBI:57623"/>
    </ligand>
</feature>
<feature type="binding site" evidence="1">
    <location>
        <position position="133"/>
    </location>
    <ligand>
        <name>isopentenyl diphosphate</name>
        <dbReference type="ChEBI" id="CHEBI:128769"/>
    </ligand>
</feature>
<feature type="binding site" evidence="1">
    <location>
        <position position="174"/>
    </location>
    <ligand>
        <name>(2E)-4-hydroxy-3-methylbut-2-enyl diphosphate</name>
        <dbReference type="ChEBI" id="CHEBI:128753"/>
    </ligand>
</feature>
<feature type="binding site" evidence="1">
    <location>
        <position position="204"/>
    </location>
    <ligand>
        <name>[4Fe-4S] cluster</name>
        <dbReference type="ChEBI" id="CHEBI:49883"/>
    </ligand>
</feature>
<feature type="binding site" evidence="1">
    <location>
        <position position="232"/>
    </location>
    <ligand>
        <name>(2E)-4-hydroxy-3-methylbut-2-enyl diphosphate</name>
        <dbReference type="ChEBI" id="CHEBI:128753"/>
    </ligand>
</feature>
<feature type="binding site" evidence="1">
    <location>
        <position position="232"/>
    </location>
    <ligand>
        <name>dimethylallyl diphosphate</name>
        <dbReference type="ChEBI" id="CHEBI:57623"/>
    </ligand>
</feature>
<feature type="binding site" evidence="1">
    <location>
        <position position="232"/>
    </location>
    <ligand>
        <name>isopentenyl diphosphate</name>
        <dbReference type="ChEBI" id="CHEBI:128769"/>
    </ligand>
</feature>
<feature type="binding site" evidence="1">
    <location>
        <position position="233"/>
    </location>
    <ligand>
        <name>(2E)-4-hydroxy-3-methylbut-2-enyl diphosphate</name>
        <dbReference type="ChEBI" id="CHEBI:128753"/>
    </ligand>
</feature>
<feature type="binding site" evidence="1">
    <location>
        <position position="233"/>
    </location>
    <ligand>
        <name>dimethylallyl diphosphate</name>
        <dbReference type="ChEBI" id="CHEBI:57623"/>
    </ligand>
</feature>
<feature type="binding site" evidence="1">
    <location>
        <position position="233"/>
    </location>
    <ligand>
        <name>isopentenyl diphosphate</name>
        <dbReference type="ChEBI" id="CHEBI:128769"/>
    </ligand>
</feature>
<feature type="binding site" evidence="1">
    <location>
        <position position="234"/>
    </location>
    <ligand>
        <name>(2E)-4-hydroxy-3-methylbut-2-enyl diphosphate</name>
        <dbReference type="ChEBI" id="CHEBI:128753"/>
    </ligand>
</feature>
<feature type="binding site" evidence="1">
    <location>
        <position position="234"/>
    </location>
    <ligand>
        <name>dimethylallyl diphosphate</name>
        <dbReference type="ChEBI" id="CHEBI:57623"/>
    </ligand>
</feature>
<feature type="binding site" evidence="1">
    <location>
        <position position="234"/>
    </location>
    <ligand>
        <name>isopentenyl diphosphate</name>
        <dbReference type="ChEBI" id="CHEBI:128769"/>
    </ligand>
</feature>
<feature type="binding site" evidence="1">
    <location>
        <position position="277"/>
    </location>
    <ligand>
        <name>(2E)-4-hydroxy-3-methylbut-2-enyl diphosphate</name>
        <dbReference type="ChEBI" id="CHEBI:128753"/>
    </ligand>
</feature>
<feature type="binding site" evidence="1">
    <location>
        <position position="277"/>
    </location>
    <ligand>
        <name>dimethylallyl diphosphate</name>
        <dbReference type="ChEBI" id="CHEBI:57623"/>
    </ligand>
</feature>
<feature type="binding site" evidence="1">
    <location>
        <position position="277"/>
    </location>
    <ligand>
        <name>isopentenyl diphosphate</name>
        <dbReference type="ChEBI" id="CHEBI:128769"/>
    </ligand>
</feature>
<reference key="1">
    <citation type="submission" date="2006-12" db="EMBL/GenBank/DDBJ databases">
        <authorList>
            <person name="Hendrix L."/>
            <person name="Mohamoud Y."/>
            <person name="Radune D."/>
            <person name="Shvartsbeyn A."/>
            <person name="Daugherty S."/>
            <person name="Dodson R."/>
            <person name="Durkin A.S."/>
            <person name="Harkins D."/>
            <person name="Huot H."/>
            <person name="Kothari S.P."/>
            <person name="Madupu R."/>
            <person name="Li J."/>
            <person name="Nelson W.C."/>
            <person name="Shrivastava S."/>
            <person name="Giglio M.G."/>
            <person name="Haft D."/>
            <person name="Selengut J."/>
            <person name="Fraser-Ligget C."/>
            <person name="Seshadri R."/>
        </authorList>
    </citation>
    <scope>NUCLEOTIDE SEQUENCE [LARGE SCALE GENOMIC DNA]</scope>
    <source>
        <strain>ATCC 35685 / KC583 / Herrer 020/F12,63</strain>
    </source>
</reference>
<accession>A1URX2</accession>
<protein>
    <recommendedName>
        <fullName evidence="1">4-hydroxy-3-methylbut-2-enyl diphosphate reductase</fullName>
        <shortName evidence="1">HMBPP reductase</shortName>
        <ecNumber evidence="1">1.17.7.4</ecNumber>
    </recommendedName>
</protein>
<gene>
    <name evidence="1" type="primary">ispH</name>
    <name type="ordered locus">BARBAKC583_0406</name>
</gene>
<dbReference type="EC" id="1.17.7.4" evidence="1"/>
<dbReference type="EMBL" id="CP000524">
    <property type="protein sequence ID" value="ABM44637.1"/>
    <property type="molecule type" value="Genomic_DNA"/>
</dbReference>
<dbReference type="RefSeq" id="WP_005766424.1">
    <property type="nucleotide sequence ID" value="NC_008783.1"/>
</dbReference>
<dbReference type="SMR" id="A1URX2"/>
<dbReference type="STRING" id="360095.BARBAKC583_0406"/>
<dbReference type="GeneID" id="4684938"/>
<dbReference type="KEGG" id="bbk:BARBAKC583_0406"/>
<dbReference type="PATRIC" id="fig|360095.6.peg.389"/>
<dbReference type="eggNOG" id="COG0761">
    <property type="taxonomic scope" value="Bacteria"/>
</dbReference>
<dbReference type="HOGENOM" id="CLU_027486_1_0_5"/>
<dbReference type="OrthoDB" id="9804068at2"/>
<dbReference type="UniPathway" id="UPA00056">
    <property type="reaction ID" value="UER00097"/>
</dbReference>
<dbReference type="UniPathway" id="UPA00059">
    <property type="reaction ID" value="UER00105"/>
</dbReference>
<dbReference type="Proteomes" id="UP000000643">
    <property type="component" value="Chromosome"/>
</dbReference>
<dbReference type="GO" id="GO:0051539">
    <property type="term" value="F:4 iron, 4 sulfur cluster binding"/>
    <property type="evidence" value="ECO:0007669"/>
    <property type="project" value="UniProtKB-UniRule"/>
</dbReference>
<dbReference type="GO" id="GO:0051745">
    <property type="term" value="F:4-hydroxy-3-methylbut-2-enyl diphosphate reductase activity"/>
    <property type="evidence" value="ECO:0007669"/>
    <property type="project" value="UniProtKB-UniRule"/>
</dbReference>
<dbReference type="GO" id="GO:0046872">
    <property type="term" value="F:metal ion binding"/>
    <property type="evidence" value="ECO:0007669"/>
    <property type="project" value="UniProtKB-KW"/>
</dbReference>
<dbReference type="GO" id="GO:0050992">
    <property type="term" value="P:dimethylallyl diphosphate biosynthetic process"/>
    <property type="evidence" value="ECO:0007669"/>
    <property type="project" value="UniProtKB-UniRule"/>
</dbReference>
<dbReference type="GO" id="GO:0019288">
    <property type="term" value="P:isopentenyl diphosphate biosynthetic process, methylerythritol 4-phosphate pathway"/>
    <property type="evidence" value="ECO:0007669"/>
    <property type="project" value="UniProtKB-UniRule"/>
</dbReference>
<dbReference type="GO" id="GO:0016114">
    <property type="term" value="P:terpenoid biosynthetic process"/>
    <property type="evidence" value="ECO:0007669"/>
    <property type="project" value="UniProtKB-UniRule"/>
</dbReference>
<dbReference type="CDD" id="cd13944">
    <property type="entry name" value="lytB_ispH"/>
    <property type="match status" value="1"/>
</dbReference>
<dbReference type="Gene3D" id="3.40.50.11270">
    <property type="match status" value="1"/>
</dbReference>
<dbReference type="Gene3D" id="3.40.1010.20">
    <property type="entry name" value="4-hydroxy-3-methylbut-2-enyl diphosphate reductase, catalytic domain"/>
    <property type="match status" value="2"/>
</dbReference>
<dbReference type="HAMAP" id="MF_00191">
    <property type="entry name" value="IspH"/>
    <property type="match status" value="1"/>
</dbReference>
<dbReference type="InterPro" id="IPR003451">
    <property type="entry name" value="LytB/IspH"/>
</dbReference>
<dbReference type="NCBIfam" id="TIGR00216">
    <property type="entry name" value="ispH_lytB"/>
    <property type="match status" value="1"/>
</dbReference>
<dbReference type="NCBIfam" id="NF002190">
    <property type="entry name" value="PRK01045.1-4"/>
    <property type="match status" value="1"/>
</dbReference>
<dbReference type="PANTHER" id="PTHR30426">
    <property type="entry name" value="4-HYDROXY-3-METHYLBUT-2-ENYL DIPHOSPHATE REDUCTASE"/>
    <property type="match status" value="1"/>
</dbReference>
<dbReference type="PANTHER" id="PTHR30426:SF0">
    <property type="entry name" value="4-HYDROXY-3-METHYLBUT-2-ENYL DIPHOSPHATE REDUCTASE"/>
    <property type="match status" value="1"/>
</dbReference>
<dbReference type="Pfam" id="PF02401">
    <property type="entry name" value="LYTB"/>
    <property type="match status" value="1"/>
</dbReference>
<comment type="function">
    <text evidence="1">Catalyzes the conversion of 1-hydroxy-2-methyl-2-(E)-butenyl 4-diphosphate (HMBPP) into a mixture of isopentenyl diphosphate (IPP) and dimethylallyl diphosphate (DMAPP). Acts in the terminal step of the DOXP/MEP pathway for isoprenoid precursor biosynthesis.</text>
</comment>
<comment type="catalytic activity">
    <reaction evidence="1">
        <text>isopentenyl diphosphate + 2 oxidized [2Fe-2S]-[ferredoxin] + H2O = (2E)-4-hydroxy-3-methylbut-2-enyl diphosphate + 2 reduced [2Fe-2S]-[ferredoxin] + 2 H(+)</text>
        <dbReference type="Rhea" id="RHEA:24488"/>
        <dbReference type="Rhea" id="RHEA-COMP:10000"/>
        <dbReference type="Rhea" id="RHEA-COMP:10001"/>
        <dbReference type="ChEBI" id="CHEBI:15377"/>
        <dbReference type="ChEBI" id="CHEBI:15378"/>
        <dbReference type="ChEBI" id="CHEBI:33737"/>
        <dbReference type="ChEBI" id="CHEBI:33738"/>
        <dbReference type="ChEBI" id="CHEBI:128753"/>
        <dbReference type="ChEBI" id="CHEBI:128769"/>
        <dbReference type="EC" id="1.17.7.4"/>
    </reaction>
</comment>
<comment type="catalytic activity">
    <reaction evidence="1">
        <text>dimethylallyl diphosphate + 2 oxidized [2Fe-2S]-[ferredoxin] + H2O = (2E)-4-hydroxy-3-methylbut-2-enyl diphosphate + 2 reduced [2Fe-2S]-[ferredoxin] + 2 H(+)</text>
        <dbReference type="Rhea" id="RHEA:24825"/>
        <dbReference type="Rhea" id="RHEA-COMP:10000"/>
        <dbReference type="Rhea" id="RHEA-COMP:10001"/>
        <dbReference type="ChEBI" id="CHEBI:15377"/>
        <dbReference type="ChEBI" id="CHEBI:15378"/>
        <dbReference type="ChEBI" id="CHEBI:33737"/>
        <dbReference type="ChEBI" id="CHEBI:33738"/>
        <dbReference type="ChEBI" id="CHEBI:57623"/>
        <dbReference type="ChEBI" id="CHEBI:128753"/>
        <dbReference type="EC" id="1.17.7.4"/>
    </reaction>
</comment>
<comment type="cofactor">
    <cofactor evidence="1">
        <name>[4Fe-4S] cluster</name>
        <dbReference type="ChEBI" id="CHEBI:49883"/>
    </cofactor>
    <text evidence="1">Binds 1 [4Fe-4S] cluster per subunit.</text>
</comment>
<comment type="pathway">
    <text evidence="1">Isoprenoid biosynthesis; dimethylallyl diphosphate biosynthesis; dimethylallyl diphosphate from (2E)-4-hydroxy-3-methylbutenyl diphosphate: step 1/1.</text>
</comment>
<comment type="pathway">
    <text evidence="1">Isoprenoid biosynthesis; isopentenyl diphosphate biosynthesis via DXP pathway; isopentenyl diphosphate from 1-deoxy-D-xylulose 5-phosphate: step 6/6.</text>
</comment>
<comment type="similarity">
    <text evidence="1">Belongs to the IspH family.</text>
</comment>
<name>ISPH_BARBK</name>
<keyword id="KW-0004">4Fe-4S</keyword>
<keyword id="KW-0408">Iron</keyword>
<keyword id="KW-0411">Iron-sulfur</keyword>
<keyword id="KW-0414">Isoprene biosynthesis</keyword>
<keyword id="KW-0479">Metal-binding</keyword>
<keyword id="KW-0560">Oxidoreductase</keyword>
<organism>
    <name type="scientific">Bartonella bacilliformis (strain ATCC 35685 / KC583 / Herrer 020/F12,63)</name>
    <dbReference type="NCBI Taxonomy" id="360095"/>
    <lineage>
        <taxon>Bacteria</taxon>
        <taxon>Pseudomonadati</taxon>
        <taxon>Pseudomonadota</taxon>
        <taxon>Alphaproteobacteria</taxon>
        <taxon>Hyphomicrobiales</taxon>
        <taxon>Bartonellaceae</taxon>
        <taxon>Bartonella</taxon>
    </lineage>
</organism>